<sequence>MSWLDKLLPPKIKQTDPKSRKGIPEGLWVKCPSCEAVLYRNDVDANLHVCPKCDHHMRIGARERLDGLLDPEGRYEIGQEIVPVDTLKFKDSRKYPDRLKEAMDETGETDAMVVMGGAIHTLPVVAACFEFSFMGGSMGSVVGERFARGAQNALEQHVPFICFTASGGARMQESLLSLMQMAKTTAMLTKLAEAKLPFISVLTDPTMGGVSASFAFLGDVVIAEPKALIGFAGPRVIEQTVREKLPEGFQRAEFLLKTGAIDMIVDRRKMRDEIAQLLALLQRQPADALA</sequence>
<comment type="function">
    <text evidence="1">Component of the acetyl coenzyme A carboxylase (ACC) complex. Biotin carboxylase (BC) catalyzes the carboxylation of biotin on its carrier protein (BCCP) and then the CO(2) group is transferred by the transcarboxylase to acetyl-CoA to form malonyl-CoA.</text>
</comment>
<comment type="catalytic activity">
    <reaction evidence="1">
        <text>N(6)-carboxybiotinyl-L-lysyl-[protein] + acetyl-CoA = N(6)-biotinyl-L-lysyl-[protein] + malonyl-CoA</text>
        <dbReference type="Rhea" id="RHEA:54728"/>
        <dbReference type="Rhea" id="RHEA-COMP:10505"/>
        <dbReference type="Rhea" id="RHEA-COMP:10506"/>
        <dbReference type="ChEBI" id="CHEBI:57288"/>
        <dbReference type="ChEBI" id="CHEBI:57384"/>
        <dbReference type="ChEBI" id="CHEBI:83144"/>
        <dbReference type="ChEBI" id="CHEBI:83145"/>
        <dbReference type="EC" id="2.1.3.15"/>
    </reaction>
</comment>
<comment type="cofactor">
    <cofactor evidence="1">
        <name>Zn(2+)</name>
        <dbReference type="ChEBI" id="CHEBI:29105"/>
    </cofactor>
    <text evidence="1">Binds 1 zinc ion per subunit.</text>
</comment>
<comment type="pathway">
    <text evidence="1">Lipid metabolism; malonyl-CoA biosynthesis; malonyl-CoA from acetyl-CoA: step 1/1.</text>
</comment>
<comment type="subunit">
    <text evidence="1">Acetyl-CoA carboxylase is a heterohexamer composed of biotin carboxyl carrier protein (AccB), biotin carboxylase (AccC) and two subunits each of ACCase subunit alpha (AccA) and ACCase subunit beta (AccD).</text>
</comment>
<comment type="subcellular location">
    <subcellularLocation>
        <location evidence="1">Cytoplasm</location>
    </subcellularLocation>
</comment>
<comment type="similarity">
    <text evidence="1">Belongs to the AccD/PCCB family.</text>
</comment>
<name>ACCD_BURO1</name>
<protein>
    <recommendedName>
        <fullName evidence="1">Acetyl-coenzyme A carboxylase carboxyl transferase subunit beta</fullName>
        <shortName evidence="1">ACCase subunit beta</shortName>
        <shortName evidence="1">Acetyl-CoA carboxylase carboxyltransferase subunit beta</shortName>
        <ecNumber evidence="1">2.1.3.15</ecNumber>
    </recommendedName>
</protein>
<accession>Q1BM67</accession>
<feature type="chain" id="PRO_0000358958" description="Acetyl-coenzyme A carboxylase carboxyl transferase subunit beta">
    <location>
        <begin position="1"/>
        <end position="290"/>
    </location>
</feature>
<feature type="domain" description="CoA carboxyltransferase N-terminal" evidence="2">
    <location>
        <begin position="27"/>
        <end position="290"/>
    </location>
</feature>
<feature type="zinc finger region" description="C4-type" evidence="1">
    <location>
        <begin position="31"/>
        <end position="53"/>
    </location>
</feature>
<feature type="binding site" evidence="1">
    <location>
        <position position="31"/>
    </location>
    <ligand>
        <name>Zn(2+)</name>
        <dbReference type="ChEBI" id="CHEBI:29105"/>
    </ligand>
</feature>
<feature type="binding site" evidence="1">
    <location>
        <position position="34"/>
    </location>
    <ligand>
        <name>Zn(2+)</name>
        <dbReference type="ChEBI" id="CHEBI:29105"/>
    </ligand>
</feature>
<feature type="binding site" evidence="1">
    <location>
        <position position="50"/>
    </location>
    <ligand>
        <name>Zn(2+)</name>
        <dbReference type="ChEBI" id="CHEBI:29105"/>
    </ligand>
</feature>
<feature type="binding site" evidence="1">
    <location>
        <position position="53"/>
    </location>
    <ligand>
        <name>Zn(2+)</name>
        <dbReference type="ChEBI" id="CHEBI:29105"/>
    </ligand>
</feature>
<dbReference type="EC" id="2.1.3.15" evidence="1"/>
<dbReference type="EMBL" id="CP000379">
    <property type="protein sequence ID" value="ABF79288.1"/>
    <property type="molecule type" value="Genomic_DNA"/>
</dbReference>
<dbReference type="SMR" id="Q1BM67"/>
<dbReference type="HOGENOM" id="CLU_015486_1_0_4"/>
<dbReference type="UniPathway" id="UPA00655">
    <property type="reaction ID" value="UER00711"/>
</dbReference>
<dbReference type="GO" id="GO:0009329">
    <property type="term" value="C:acetate CoA-transferase complex"/>
    <property type="evidence" value="ECO:0007669"/>
    <property type="project" value="TreeGrafter"/>
</dbReference>
<dbReference type="GO" id="GO:0003989">
    <property type="term" value="F:acetyl-CoA carboxylase activity"/>
    <property type="evidence" value="ECO:0007669"/>
    <property type="project" value="InterPro"/>
</dbReference>
<dbReference type="GO" id="GO:0005524">
    <property type="term" value="F:ATP binding"/>
    <property type="evidence" value="ECO:0007669"/>
    <property type="project" value="UniProtKB-KW"/>
</dbReference>
<dbReference type="GO" id="GO:0016743">
    <property type="term" value="F:carboxyl- or carbamoyltransferase activity"/>
    <property type="evidence" value="ECO:0007669"/>
    <property type="project" value="UniProtKB-UniRule"/>
</dbReference>
<dbReference type="GO" id="GO:0008270">
    <property type="term" value="F:zinc ion binding"/>
    <property type="evidence" value="ECO:0007669"/>
    <property type="project" value="UniProtKB-UniRule"/>
</dbReference>
<dbReference type="GO" id="GO:0006633">
    <property type="term" value="P:fatty acid biosynthetic process"/>
    <property type="evidence" value="ECO:0007669"/>
    <property type="project" value="UniProtKB-KW"/>
</dbReference>
<dbReference type="GO" id="GO:2001295">
    <property type="term" value="P:malonyl-CoA biosynthetic process"/>
    <property type="evidence" value="ECO:0007669"/>
    <property type="project" value="UniProtKB-UniRule"/>
</dbReference>
<dbReference type="Gene3D" id="3.90.226.10">
    <property type="entry name" value="2-enoyl-CoA Hydratase, Chain A, domain 1"/>
    <property type="match status" value="1"/>
</dbReference>
<dbReference type="HAMAP" id="MF_01395">
    <property type="entry name" value="AcetylCoA_CT_beta"/>
    <property type="match status" value="1"/>
</dbReference>
<dbReference type="InterPro" id="IPR034733">
    <property type="entry name" value="AcCoA_carboxyl_beta"/>
</dbReference>
<dbReference type="InterPro" id="IPR000438">
    <property type="entry name" value="Acetyl_CoA_COase_Trfase_b_su"/>
</dbReference>
<dbReference type="InterPro" id="IPR029045">
    <property type="entry name" value="ClpP/crotonase-like_dom_sf"/>
</dbReference>
<dbReference type="InterPro" id="IPR011762">
    <property type="entry name" value="COA_CT_N"/>
</dbReference>
<dbReference type="InterPro" id="IPR041010">
    <property type="entry name" value="Znf-ACC"/>
</dbReference>
<dbReference type="NCBIfam" id="TIGR00515">
    <property type="entry name" value="accD"/>
    <property type="match status" value="1"/>
</dbReference>
<dbReference type="PANTHER" id="PTHR42995">
    <property type="entry name" value="ACETYL-COENZYME A CARBOXYLASE CARBOXYL TRANSFERASE SUBUNIT BETA, CHLOROPLASTIC"/>
    <property type="match status" value="1"/>
</dbReference>
<dbReference type="PANTHER" id="PTHR42995:SF5">
    <property type="entry name" value="ACETYL-COENZYME A CARBOXYLASE CARBOXYL TRANSFERASE SUBUNIT BETA, CHLOROPLASTIC"/>
    <property type="match status" value="1"/>
</dbReference>
<dbReference type="Pfam" id="PF01039">
    <property type="entry name" value="Carboxyl_trans"/>
    <property type="match status" value="1"/>
</dbReference>
<dbReference type="Pfam" id="PF17848">
    <property type="entry name" value="Zn_ribbon_ACC"/>
    <property type="match status" value="1"/>
</dbReference>
<dbReference type="PRINTS" id="PR01070">
    <property type="entry name" value="ACCCTRFRASEB"/>
</dbReference>
<dbReference type="SUPFAM" id="SSF52096">
    <property type="entry name" value="ClpP/crotonase"/>
    <property type="match status" value="1"/>
</dbReference>
<dbReference type="PROSITE" id="PS50980">
    <property type="entry name" value="COA_CT_NTER"/>
    <property type="match status" value="1"/>
</dbReference>
<gene>
    <name evidence="1" type="primary">accD</name>
    <name type="ordered locus">Bcen_4406</name>
</gene>
<organism>
    <name type="scientific">Burkholderia orbicola (strain AU 1054)</name>
    <dbReference type="NCBI Taxonomy" id="331271"/>
    <lineage>
        <taxon>Bacteria</taxon>
        <taxon>Pseudomonadati</taxon>
        <taxon>Pseudomonadota</taxon>
        <taxon>Betaproteobacteria</taxon>
        <taxon>Burkholderiales</taxon>
        <taxon>Burkholderiaceae</taxon>
        <taxon>Burkholderia</taxon>
        <taxon>Burkholderia cepacia complex</taxon>
        <taxon>Burkholderia orbicola</taxon>
    </lineage>
</organism>
<reference key="1">
    <citation type="submission" date="2006-05" db="EMBL/GenBank/DDBJ databases">
        <title>Complete sequence of chromosome 2 of Burkholderia cenocepacia AU 1054.</title>
        <authorList>
            <consortium name="US DOE Joint Genome Institute"/>
            <person name="Copeland A."/>
            <person name="Lucas S."/>
            <person name="Lapidus A."/>
            <person name="Barry K."/>
            <person name="Detter J.C."/>
            <person name="Glavina del Rio T."/>
            <person name="Hammon N."/>
            <person name="Israni S."/>
            <person name="Dalin E."/>
            <person name="Tice H."/>
            <person name="Pitluck S."/>
            <person name="Chain P."/>
            <person name="Malfatti S."/>
            <person name="Shin M."/>
            <person name="Vergez L."/>
            <person name="Schmutz J."/>
            <person name="Larimer F."/>
            <person name="Land M."/>
            <person name="Hauser L."/>
            <person name="Kyrpides N."/>
            <person name="Lykidis A."/>
            <person name="LiPuma J.J."/>
            <person name="Konstantinidis K."/>
            <person name="Tiedje J.M."/>
            <person name="Richardson P."/>
        </authorList>
    </citation>
    <scope>NUCLEOTIDE SEQUENCE [LARGE SCALE GENOMIC DNA]</scope>
    <source>
        <strain>AU 1054</strain>
    </source>
</reference>
<evidence type="ECO:0000255" key="1">
    <source>
        <dbReference type="HAMAP-Rule" id="MF_01395"/>
    </source>
</evidence>
<evidence type="ECO:0000255" key="2">
    <source>
        <dbReference type="PROSITE-ProRule" id="PRU01136"/>
    </source>
</evidence>
<keyword id="KW-0067">ATP-binding</keyword>
<keyword id="KW-0963">Cytoplasm</keyword>
<keyword id="KW-0275">Fatty acid biosynthesis</keyword>
<keyword id="KW-0276">Fatty acid metabolism</keyword>
<keyword id="KW-0444">Lipid biosynthesis</keyword>
<keyword id="KW-0443">Lipid metabolism</keyword>
<keyword id="KW-0479">Metal-binding</keyword>
<keyword id="KW-0547">Nucleotide-binding</keyword>
<keyword id="KW-0808">Transferase</keyword>
<keyword id="KW-0862">Zinc</keyword>
<keyword id="KW-0863">Zinc-finger</keyword>
<proteinExistence type="inferred from homology"/>